<name>MPTA_PICTO</name>
<evidence type="ECO:0000255" key="1">
    <source>
        <dbReference type="HAMAP-Rule" id="MF_01527"/>
    </source>
</evidence>
<comment type="function">
    <text evidence="1">Converts GTP to 7,8-dihydro-D-neopterin 2',3'-cyclic phosphate, the first intermediate in the biosynthesis of coenzyme methanopterin.</text>
</comment>
<comment type="catalytic activity">
    <reaction evidence="1">
        <text>GTP + H2O = 7,8-dihydroneopterin 2',3'-cyclic phosphate + formate + diphosphate + H(+)</text>
        <dbReference type="Rhea" id="RHEA:25860"/>
        <dbReference type="ChEBI" id="CHEBI:15377"/>
        <dbReference type="ChEBI" id="CHEBI:15378"/>
        <dbReference type="ChEBI" id="CHEBI:15740"/>
        <dbReference type="ChEBI" id="CHEBI:33019"/>
        <dbReference type="ChEBI" id="CHEBI:37565"/>
        <dbReference type="ChEBI" id="CHEBI:58854"/>
        <dbReference type="EC" id="3.5.4.39"/>
    </reaction>
</comment>
<comment type="cofactor">
    <cofactor evidence="1">
        <name>Fe(2+)</name>
        <dbReference type="ChEBI" id="CHEBI:29033"/>
    </cofactor>
    <text evidence="1">Binds 1 Fe(2+) ion per subunit.</text>
</comment>
<comment type="pathway">
    <text evidence="1">Cofactor biosynthesis; 5,6,7,8-tetrahydromethanopterin biosynthesis.</text>
</comment>
<comment type="subunit">
    <text evidence="1">Homodimer.</text>
</comment>
<comment type="similarity">
    <text evidence="1">Belongs to the GTP cyclohydrolase IV family.</text>
</comment>
<accession>Q6L0A8</accession>
<organism>
    <name type="scientific">Picrophilus torridus (strain ATCC 700027 / DSM 9790 / JCM 10055 / NBRC 100828 / KAW 2/3)</name>
    <dbReference type="NCBI Taxonomy" id="1122961"/>
    <lineage>
        <taxon>Archaea</taxon>
        <taxon>Methanobacteriati</taxon>
        <taxon>Thermoplasmatota</taxon>
        <taxon>Thermoplasmata</taxon>
        <taxon>Thermoplasmatales</taxon>
        <taxon>Picrophilaceae</taxon>
        <taxon>Picrophilus</taxon>
    </lineage>
</organism>
<reference key="1">
    <citation type="journal article" date="2004" name="Proc. Natl. Acad. Sci. U.S.A.">
        <title>Genome sequence of Picrophilus torridus and its implications for life around pH 0.</title>
        <authorList>
            <person name="Fuetterer O."/>
            <person name="Angelov A."/>
            <person name="Liesegang H."/>
            <person name="Gottschalk G."/>
            <person name="Schleper C."/>
            <person name="Schepers B."/>
            <person name="Dock C."/>
            <person name="Antranikian G."/>
            <person name="Liebl W."/>
        </authorList>
    </citation>
    <scope>NUCLEOTIDE SEQUENCE [LARGE SCALE GENOMIC DNA]</scope>
    <source>
        <strain>ATCC 700027 / DSM 9790 / JCM 10055 / NBRC 100828 / KAW 2/3</strain>
    </source>
</reference>
<proteinExistence type="inferred from homology"/>
<feature type="chain" id="PRO_0000147748" description="GTP cyclohydrolase MptA">
    <location>
        <begin position="1"/>
        <end position="273"/>
    </location>
</feature>
<feature type="site" description="May be catalytically important" evidence="1">
    <location>
        <position position="136"/>
    </location>
</feature>
<gene>
    <name evidence="1" type="primary">mptA</name>
    <name type="ordered locus">PTO1009</name>
</gene>
<dbReference type="EC" id="3.5.4.39" evidence="1"/>
<dbReference type="EMBL" id="AE017261">
    <property type="protein sequence ID" value="AAT43594.1"/>
    <property type="molecule type" value="Genomic_DNA"/>
</dbReference>
<dbReference type="RefSeq" id="WP_011177810.1">
    <property type="nucleotide sequence ID" value="NC_005877.1"/>
</dbReference>
<dbReference type="SMR" id="Q6L0A8"/>
<dbReference type="STRING" id="263820.PTO1009"/>
<dbReference type="PaxDb" id="263820-PTO1009"/>
<dbReference type="GeneID" id="2844622"/>
<dbReference type="KEGG" id="pto:PTO1009"/>
<dbReference type="eggNOG" id="arCOG04301">
    <property type="taxonomic scope" value="Archaea"/>
</dbReference>
<dbReference type="HOGENOM" id="CLU_062816_1_1_2"/>
<dbReference type="InParanoid" id="Q6L0A8"/>
<dbReference type="OrthoDB" id="53087at2157"/>
<dbReference type="UniPathway" id="UPA00065"/>
<dbReference type="Proteomes" id="UP000000438">
    <property type="component" value="Chromosome"/>
</dbReference>
<dbReference type="GO" id="GO:0003934">
    <property type="term" value="F:GTP cyclohydrolase I activity"/>
    <property type="evidence" value="ECO:0007669"/>
    <property type="project" value="InterPro"/>
</dbReference>
<dbReference type="GO" id="GO:0044682">
    <property type="term" value="F:GTP cyclohydrolase IV activity"/>
    <property type="evidence" value="ECO:0007669"/>
    <property type="project" value="UniProtKB-UniRule"/>
</dbReference>
<dbReference type="GO" id="GO:0005506">
    <property type="term" value="F:iron ion binding"/>
    <property type="evidence" value="ECO:0007669"/>
    <property type="project" value="UniProtKB-UniRule"/>
</dbReference>
<dbReference type="GO" id="GO:2001118">
    <property type="term" value="P:tetrahydromethanopterin biosynthetic process"/>
    <property type="evidence" value="ECO:0007669"/>
    <property type="project" value="UniProtKB-UniRule"/>
</dbReference>
<dbReference type="Gene3D" id="3.10.270.10">
    <property type="entry name" value="Urate Oxidase"/>
    <property type="match status" value="1"/>
</dbReference>
<dbReference type="HAMAP" id="MF_01527_A">
    <property type="entry name" value="GTP_cyclohydrol_A"/>
    <property type="match status" value="1"/>
</dbReference>
<dbReference type="InterPro" id="IPR003801">
    <property type="entry name" value="GTP_cyclohydrolase_FolE2/MptA"/>
</dbReference>
<dbReference type="InterPro" id="IPR022840">
    <property type="entry name" value="GTP_cyclohydrolase_MptA"/>
</dbReference>
<dbReference type="PANTHER" id="PTHR36445">
    <property type="entry name" value="GTP CYCLOHYDROLASE MPTA"/>
    <property type="match status" value="1"/>
</dbReference>
<dbReference type="PANTHER" id="PTHR36445:SF1">
    <property type="entry name" value="GTP CYCLOHYDROLASE MPTA"/>
    <property type="match status" value="1"/>
</dbReference>
<dbReference type="Pfam" id="PF02649">
    <property type="entry name" value="GCHY-1"/>
    <property type="match status" value="1"/>
</dbReference>
<protein>
    <recommendedName>
        <fullName evidence="1">GTP cyclohydrolase MptA</fullName>
        <ecNumber evidence="1">3.5.4.39</ecNumber>
    </recommendedName>
    <alternativeName>
        <fullName evidence="1">GTP cyclohydrolase IV</fullName>
    </alternativeName>
</protein>
<sequence>MIELKDVQGFRPDYEIPIKRAGIKSFKRRVKLNYNNESFDSYVDVSISVSLNPDRKGLDMSRTIESVRSSYNLNDVAYDIYNDLFSRINYSSSGYVNVSFDFYYNNKIYPVSLIAEGDKNDVKRYVEVSAEGMTVCPCAMETIRSIMLYDYNVSYGDIGISHNQRNKASLKIQYIKDAHLERLIDILESSFSYPVRNMLKRYDEGKMIIEAHKRPKFVEDVVREIAYKAAFMEPEMNLYMDVRSESFESIHPHNAYAEIEDYTANIRSYLKNR</sequence>
<keyword id="KW-0378">Hydrolase</keyword>
<keyword id="KW-0408">Iron</keyword>
<keyword id="KW-0479">Metal-binding</keyword>